<comment type="function">
    <text evidence="1">This protein is one of the two subunits of integration host factor, a specific DNA-binding protein that functions in genetic recombination as well as in transcriptional and translational control.</text>
</comment>
<comment type="subunit">
    <text evidence="1">Heterodimer of an alpha and a beta chain.</text>
</comment>
<comment type="similarity">
    <text evidence="1">Belongs to the bacterial histone-like protein family.</text>
</comment>
<proteinExistence type="inferred from homology"/>
<evidence type="ECO:0000255" key="1">
    <source>
        <dbReference type="HAMAP-Rule" id="MF_00380"/>
    </source>
</evidence>
<dbReference type="EMBL" id="CR555306">
    <property type="protein sequence ID" value="CAI06580.1"/>
    <property type="molecule type" value="Genomic_DNA"/>
</dbReference>
<dbReference type="RefSeq" id="WP_011236311.1">
    <property type="nucleotide sequence ID" value="NC_006513.1"/>
</dbReference>
<dbReference type="SMR" id="Q5P7Y1"/>
<dbReference type="STRING" id="76114.ebA866"/>
<dbReference type="KEGG" id="eba:ebA866"/>
<dbReference type="eggNOG" id="COG0776">
    <property type="taxonomic scope" value="Bacteria"/>
</dbReference>
<dbReference type="HOGENOM" id="CLU_105066_1_3_4"/>
<dbReference type="OrthoDB" id="9797747at2"/>
<dbReference type="Proteomes" id="UP000006552">
    <property type="component" value="Chromosome"/>
</dbReference>
<dbReference type="GO" id="GO:0005829">
    <property type="term" value="C:cytosol"/>
    <property type="evidence" value="ECO:0007669"/>
    <property type="project" value="TreeGrafter"/>
</dbReference>
<dbReference type="GO" id="GO:0003677">
    <property type="term" value="F:DNA binding"/>
    <property type="evidence" value="ECO:0007669"/>
    <property type="project" value="UniProtKB-UniRule"/>
</dbReference>
<dbReference type="GO" id="GO:0030527">
    <property type="term" value="F:structural constituent of chromatin"/>
    <property type="evidence" value="ECO:0007669"/>
    <property type="project" value="InterPro"/>
</dbReference>
<dbReference type="GO" id="GO:0006310">
    <property type="term" value="P:DNA recombination"/>
    <property type="evidence" value="ECO:0007669"/>
    <property type="project" value="UniProtKB-UniRule"/>
</dbReference>
<dbReference type="GO" id="GO:0009893">
    <property type="term" value="P:positive regulation of metabolic process"/>
    <property type="evidence" value="ECO:0007669"/>
    <property type="project" value="UniProtKB-ARBA"/>
</dbReference>
<dbReference type="GO" id="GO:0006355">
    <property type="term" value="P:regulation of DNA-templated transcription"/>
    <property type="evidence" value="ECO:0007669"/>
    <property type="project" value="UniProtKB-UniRule"/>
</dbReference>
<dbReference type="GO" id="GO:0006417">
    <property type="term" value="P:regulation of translation"/>
    <property type="evidence" value="ECO:0007669"/>
    <property type="project" value="UniProtKB-UniRule"/>
</dbReference>
<dbReference type="CDD" id="cd13835">
    <property type="entry name" value="IHF_A"/>
    <property type="match status" value="1"/>
</dbReference>
<dbReference type="FunFam" id="4.10.520.10:FF:000002">
    <property type="entry name" value="Integration host factor subunit alpha"/>
    <property type="match status" value="1"/>
</dbReference>
<dbReference type="Gene3D" id="4.10.520.10">
    <property type="entry name" value="IHF-like DNA-binding proteins"/>
    <property type="match status" value="1"/>
</dbReference>
<dbReference type="HAMAP" id="MF_00380">
    <property type="entry name" value="IHF_alpha"/>
    <property type="match status" value="1"/>
</dbReference>
<dbReference type="InterPro" id="IPR000119">
    <property type="entry name" value="Hist_DNA-bd"/>
</dbReference>
<dbReference type="InterPro" id="IPR020816">
    <property type="entry name" value="Histone-like_DNA-bd_CS"/>
</dbReference>
<dbReference type="InterPro" id="IPR010992">
    <property type="entry name" value="IHF-like_DNA-bd_dom_sf"/>
</dbReference>
<dbReference type="InterPro" id="IPR005684">
    <property type="entry name" value="IHF_alpha"/>
</dbReference>
<dbReference type="NCBIfam" id="TIGR00987">
    <property type="entry name" value="himA"/>
    <property type="match status" value="1"/>
</dbReference>
<dbReference type="NCBIfam" id="NF001401">
    <property type="entry name" value="PRK00285.1"/>
    <property type="match status" value="1"/>
</dbReference>
<dbReference type="PANTHER" id="PTHR33175">
    <property type="entry name" value="DNA-BINDING PROTEIN HU"/>
    <property type="match status" value="1"/>
</dbReference>
<dbReference type="PANTHER" id="PTHR33175:SF2">
    <property type="entry name" value="INTEGRATION HOST FACTOR SUBUNIT ALPHA"/>
    <property type="match status" value="1"/>
</dbReference>
<dbReference type="Pfam" id="PF00216">
    <property type="entry name" value="Bac_DNA_binding"/>
    <property type="match status" value="1"/>
</dbReference>
<dbReference type="PRINTS" id="PR01727">
    <property type="entry name" value="DNABINDINGHU"/>
</dbReference>
<dbReference type="SMART" id="SM00411">
    <property type="entry name" value="BHL"/>
    <property type="match status" value="1"/>
</dbReference>
<dbReference type="SUPFAM" id="SSF47729">
    <property type="entry name" value="IHF-like DNA-binding proteins"/>
    <property type="match status" value="1"/>
</dbReference>
<dbReference type="PROSITE" id="PS00045">
    <property type="entry name" value="HISTONE_LIKE"/>
    <property type="match status" value="1"/>
</dbReference>
<keyword id="KW-0233">DNA recombination</keyword>
<keyword id="KW-0238">DNA-binding</keyword>
<keyword id="KW-1185">Reference proteome</keyword>
<keyword id="KW-0804">Transcription</keyword>
<keyword id="KW-0805">Transcription regulation</keyword>
<keyword id="KW-0810">Translation regulation</keyword>
<organism>
    <name type="scientific">Aromatoleum aromaticum (strain DSM 19018 / LMG 30748 / EbN1)</name>
    <name type="common">Azoarcus sp. (strain EbN1)</name>
    <dbReference type="NCBI Taxonomy" id="76114"/>
    <lineage>
        <taxon>Bacteria</taxon>
        <taxon>Pseudomonadati</taxon>
        <taxon>Pseudomonadota</taxon>
        <taxon>Betaproteobacteria</taxon>
        <taxon>Rhodocyclales</taxon>
        <taxon>Rhodocyclaceae</taxon>
        <taxon>Aromatoleum</taxon>
    </lineage>
</organism>
<accession>Q5P7Y1</accession>
<protein>
    <recommendedName>
        <fullName evidence="1">Integration host factor subunit alpha</fullName>
        <shortName evidence="1">IHF-alpha</shortName>
    </recommendedName>
</protein>
<feature type="chain" id="PRO_0000277712" description="Integration host factor subunit alpha">
    <location>
        <begin position="1"/>
        <end position="103"/>
    </location>
</feature>
<sequence>MNVTLTKAELADLLFERVGLNKREAKDMVEGFFEEIRQALERGECVKLSGFGNFQLRDKPQRPGRNPKTGEEIPITARRVVTFHASQKLKAAVEQLSDASKQP</sequence>
<name>IHFA_AROAE</name>
<reference key="1">
    <citation type="journal article" date="2005" name="Arch. Microbiol.">
        <title>The genome sequence of an anaerobic aromatic-degrading denitrifying bacterium, strain EbN1.</title>
        <authorList>
            <person name="Rabus R."/>
            <person name="Kube M."/>
            <person name="Heider J."/>
            <person name="Beck A."/>
            <person name="Heitmann K."/>
            <person name="Widdel F."/>
            <person name="Reinhardt R."/>
        </authorList>
    </citation>
    <scope>NUCLEOTIDE SEQUENCE [LARGE SCALE GENOMIC DNA]</scope>
    <source>
        <strain>DSM 19018 / LMG 30748 / EbN1</strain>
    </source>
</reference>
<gene>
    <name evidence="1" type="primary">ihfA</name>
    <name evidence="1" type="synonym">himA</name>
    <name type="ordered locus">AZOSEA04580</name>
    <name type="ORF">ebA866</name>
</gene>